<dbReference type="EMBL" id="AE005674">
    <property type="protein sequence ID" value="AAN42248.1"/>
    <property type="molecule type" value="Genomic_DNA"/>
</dbReference>
<dbReference type="EMBL" id="AE014073">
    <property type="protein sequence ID" value="AAP16119.1"/>
    <property type="molecule type" value="Genomic_DNA"/>
</dbReference>
<dbReference type="RefSeq" id="NP_706541.1">
    <property type="nucleotide sequence ID" value="NC_004337.2"/>
</dbReference>
<dbReference type="RefSeq" id="WP_000131709.1">
    <property type="nucleotide sequence ID" value="NZ_CP123365.1"/>
</dbReference>
<dbReference type="BMRB" id="Q83S79"/>
<dbReference type="SMR" id="Q83S79"/>
<dbReference type="STRING" id="198214.SF0610"/>
<dbReference type="PaxDb" id="198214-SF0610"/>
<dbReference type="GeneID" id="1023593"/>
<dbReference type="KEGG" id="sfl:SF0610"/>
<dbReference type="KEGG" id="sfx:S0621"/>
<dbReference type="PATRIC" id="fig|198214.7.peg.711"/>
<dbReference type="HOGENOM" id="CLU_096072_3_3_6"/>
<dbReference type="Proteomes" id="UP000001006">
    <property type="component" value="Chromosome"/>
</dbReference>
<dbReference type="Proteomes" id="UP000002673">
    <property type="component" value="Chromosome"/>
</dbReference>
<dbReference type="GO" id="GO:0005829">
    <property type="term" value="C:cytosol"/>
    <property type="evidence" value="ECO:0007669"/>
    <property type="project" value="TreeGrafter"/>
</dbReference>
<dbReference type="GO" id="GO:0003700">
    <property type="term" value="F:DNA-binding transcription factor activity"/>
    <property type="evidence" value="ECO:0007669"/>
    <property type="project" value="InterPro"/>
</dbReference>
<dbReference type="GO" id="GO:0000976">
    <property type="term" value="F:transcription cis-regulatory region binding"/>
    <property type="evidence" value="ECO:0007669"/>
    <property type="project" value="TreeGrafter"/>
</dbReference>
<dbReference type="GO" id="GO:0008270">
    <property type="term" value="F:zinc ion binding"/>
    <property type="evidence" value="ECO:0007669"/>
    <property type="project" value="TreeGrafter"/>
</dbReference>
<dbReference type="GO" id="GO:0045892">
    <property type="term" value="P:negative regulation of DNA-templated transcription"/>
    <property type="evidence" value="ECO:0007669"/>
    <property type="project" value="TreeGrafter"/>
</dbReference>
<dbReference type="GO" id="GO:1900705">
    <property type="term" value="P:negative regulation of siderophore biosynthetic process"/>
    <property type="evidence" value="ECO:0007669"/>
    <property type="project" value="TreeGrafter"/>
</dbReference>
<dbReference type="CDD" id="cd07153">
    <property type="entry name" value="Fur_like"/>
    <property type="match status" value="1"/>
</dbReference>
<dbReference type="FunFam" id="1.10.10.10:FF:000007">
    <property type="entry name" value="Ferric uptake regulation protein"/>
    <property type="match status" value="1"/>
</dbReference>
<dbReference type="FunFam" id="3.30.1490.190:FF:000001">
    <property type="entry name" value="Ferric uptake regulation protein"/>
    <property type="match status" value="1"/>
</dbReference>
<dbReference type="Gene3D" id="3.30.1490.190">
    <property type="match status" value="1"/>
</dbReference>
<dbReference type="Gene3D" id="1.10.10.10">
    <property type="entry name" value="Winged helix-like DNA-binding domain superfamily/Winged helix DNA-binding domain"/>
    <property type="match status" value="1"/>
</dbReference>
<dbReference type="InterPro" id="IPR002481">
    <property type="entry name" value="FUR"/>
</dbReference>
<dbReference type="InterPro" id="IPR043135">
    <property type="entry name" value="Fur_C"/>
</dbReference>
<dbReference type="InterPro" id="IPR036388">
    <property type="entry name" value="WH-like_DNA-bd_sf"/>
</dbReference>
<dbReference type="InterPro" id="IPR036390">
    <property type="entry name" value="WH_DNA-bd_sf"/>
</dbReference>
<dbReference type="NCBIfam" id="NF006999">
    <property type="entry name" value="PRK09462.1"/>
    <property type="match status" value="1"/>
</dbReference>
<dbReference type="PANTHER" id="PTHR33202:SF2">
    <property type="entry name" value="FERRIC UPTAKE REGULATION PROTEIN"/>
    <property type="match status" value="1"/>
</dbReference>
<dbReference type="PANTHER" id="PTHR33202">
    <property type="entry name" value="ZINC UPTAKE REGULATION PROTEIN"/>
    <property type="match status" value="1"/>
</dbReference>
<dbReference type="Pfam" id="PF01475">
    <property type="entry name" value="FUR"/>
    <property type="match status" value="1"/>
</dbReference>
<dbReference type="SUPFAM" id="SSF46785">
    <property type="entry name" value="Winged helix' DNA-binding domain"/>
    <property type="match status" value="1"/>
</dbReference>
<name>FUR_SHIFL</name>
<proteinExistence type="inferred from homology"/>
<comment type="function">
    <text evidence="1">Acts as a global negative controlling element, employing Fe(2+) as a cofactor to bind the operator of the repressed genes. Regulates the expression of several outer-membrane proteins including the iron transport operon (By similarity).</text>
</comment>
<comment type="subunit">
    <text evidence="1">Homodimer.</text>
</comment>
<comment type="subcellular location">
    <subcellularLocation>
        <location evidence="1">Cytoplasm</location>
    </subcellularLocation>
</comment>
<comment type="similarity">
    <text evidence="2">Belongs to the Fur family.</text>
</comment>
<feature type="chain" id="PRO_0000095571" description="Ferric uptake regulation protein">
    <location>
        <begin position="1"/>
        <end position="148"/>
    </location>
</feature>
<feature type="region of interest" description="DNA-binding" evidence="1">
    <location>
        <begin position="1"/>
        <end position="84"/>
    </location>
</feature>
<feature type="region of interest" description="Dimerization" evidence="1">
    <location>
        <begin position="85"/>
        <end position="148"/>
    </location>
</feature>
<feature type="binding site" evidence="1">
    <location>
        <position position="33"/>
    </location>
    <ligand>
        <name>Zn(2+)</name>
        <dbReference type="ChEBI" id="CHEBI:29105"/>
    </ligand>
</feature>
<feature type="binding site" evidence="1">
    <location>
        <position position="81"/>
    </location>
    <ligand>
        <name>Zn(2+)</name>
        <dbReference type="ChEBI" id="CHEBI:29105"/>
    </ligand>
</feature>
<feature type="binding site" evidence="1">
    <location>
        <position position="87"/>
    </location>
    <ligand>
        <name>Fe cation</name>
        <dbReference type="ChEBI" id="CHEBI:24875"/>
    </ligand>
</feature>
<feature type="binding site" evidence="1">
    <location>
        <position position="89"/>
    </location>
    <ligand>
        <name>Fe cation</name>
        <dbReference type="ChEBI" id="CHEBI:24875"/>
    </ligand>
</feature>
<feature type="binding site" evidence="1">
    <location>
        <position position="90"/>
    </location>
    <ligand>
        <name>Zn(2+)</name>
        <dbReference type="ChEBI" id="CHEBI:29105"/>
    </ligand>
</feature>
<feature type="binding site" evidence="1">
    <location>
        <position position="93"/>
    </location>
    <ligand>
        <name>Zn(2+)</name>
        <dbReference type="ChEBI" id="CHEBI:29105"/>
    </ligand>
</feature>
<feature type="binding site" evidence="1">
    <location>
        <position position="96"/>
    </location>
    <ligand>
        <name>Zn(2+)</name>
        <dbReference type="ChEBI" id="CHEBI:29105"/>
    </ligand>
</feature>
<feature type="binding site" evidence="1">
    <location>
        <position position="101"/>
    </location>
    <ligand>
        <name>Zn(2+)</name>
        <dbReference type="ChEBI" id="CHEBI:29105"/>
    </ligand>
</feature>
<feature type="binding site" evidence="1">
    <location>
        <position position="108"/>
    </location>
    <ligand>
        <name>Fe cation</name>
        <dbReference type="ChEBI" id="CHEBI:24875"/>
    </ligand>
</feature>
<feature type="binding site" evidence="1">
    <location>
        <position position="125"/>
    </location>
    <ligand>
        <name>Fe cation</name>
        <dbReference type="ChEBI" id="CHEBI:24875"/>
    </ligand>
</feature>
<feature type="sequence conflict" description="In Ref. 2; AAP16119." evidence="2" ref="2">
    <original>R</original>
    <variation>K</variation>
    <location>
        <position position="14"/>
    </location>
</feature>
<feature type="sequence conflict" description="In Ref. 2; AAP16119." evidence="2" ref="2">
    <original>G</original>
    <variation>R</variation>
    <location>
        <position position="112"/>
    </location>
</feature>
<reference key="1">
    <citation type="journal article" date="2002" name="Nucleic Acids Res.">
        <title>Genome sequence of Shigella flexneri 2a: insights into pathogenicity through comparison with genomes of Escherichia coli K12 and O157.</title>
        <authorList>
            <person name="Jin Q."/>
            <person name="Yuan Z."/>
            <person name="Xu J."/>
            <person name="Wang Y."/>
            <person name="Shen Y."/>
            <person name="Lu W."/>
            <person name="Wang J."/>
            <person name="Liu H."/>
            <person name="Yang J."/>
            <person name="Yang F."/>
            <person name="Zhang X."/>
            <person name="Zhang J."/>
            <person name="Yang G."/>
            <person name="Wu H."/>
            <person name="Qu D."/>
            <person name="Dong J."/>
            <person name="Sun L."/>
            <person name="Xue Y."/>
            <person name="Zhao A."/>
            <person name="Gao Y."/>
            <person name="Zhu J."/>
            <person name="Kan B."/>
            <person name="Ding K."/>
            <person name="Chen S."/>
            <person name="Cheng H."/>
            <person name="Yao Z."/>
            <person name="He B."/>
            <person name="Chen R."/>
            <person name="Ma D."/>
            <person name="Qiang B."/>
            <person name="Wen Y."/>
            <person name="Hou Y."/>
            <person name="Yu J."/>
        </authorList>
    </citation>
    <scope>NUCLEOTIDE SEQUENCE [LARGE SCALE GENOMIC DNA]</scope>
    <source>
        <strain>301 / Serotype 2a</strain>
    </source>
</reference>
<reference key="2">
    <citation type="journal article" date="2003" name="Infect. Immun.">
        <title>Complete genome sequence and comparative genomics of Shigella flexneri serotype 2a strain 2457T.</title>
        <authorList>
            <person name="Wei J."/>
            <person name="Goldberg M.B."/>
            <person name="Burland V."/>
            <person name="Venkatesan M.M."/>
            <person name="Deng W."/>
            <person name="Fournier G."/>
            <person name="Mayhew G.F."/>
            <person name="Plunkett G. III"/>
            <person name="Rose D.J."/>
            <person name="Darling A."/>
            <person name="Mau B."/>
            <person name="Perna N.T."/>
            <person name="Payne S.M."/>
            <person name="Runyen-Janecky L.J."/>
            <person name="Zhou S."/>
            <person name="Schwartz D.C."/>
            <person name="Blattner F.R."/>
        </authorList>
    </citation>
    <scope>NUCLEOTIDE SEQUENCE [LARGE SCALE GENOMIC DNA]</scope>
    <source>
        <strain>ATCC 700930 / 2457T / Serotype 2a</strain>
    </source>
</reference>
<sequence length="148" mass="16724">MTDNNTALKKAGLRVTLPRLKILEVLQEPDNHHVSAEDLYKRLIDMGEEIGLATVYRVLNQFDDAGIVTRHNFEGGKSVFELTQQHHHDHLICLDCGKVIEFSDDSIEARQGEIAAKHGIRLTNHSLYLYGHCAEGDCREDEHAHEGK</sequence>
<accession>Q83S79</accession>
<evidence type="ECO:0000250" key="1"/>
<evidence type="ECO:0000305" key="2"/>
<keyword id="KW-0963">Cytoplasm</keyword>
<keyword id="KW-0238">DNA-binding</keyword>
<keyword id="KW-0408">Iron</keyword>
<keyword id="KW-0479">Metal-binding</keyword>
<keyword id="KW-1185">Reference proteome</keyword>
<keyword id="KW-0678">Repressor</keyword>
<keyword id="KW-0804">Transcription</keyword>
<keyword id="KW-0805">Transcription regulation</keyword>
<keyword id="KW-0862">Zinc</keyword>
<organism>
    <name type="scientific">Shigella flexneri</name>
    <dbReference type="NCBI Taxonomy" id="623"/>
    <lineage>
        <taxon>Bacteria</taxon>
        <taxon>Pseudomonadati</taxon>
        <taxon>Pseudomonadota</taxon>
        <taxon>Gammaproteobacteria</taxon>
        <taxon>Enterobacterales</taxon>
        <taxon>Enterobacteriaceae</taxon>
        <taxon>Shigella</taxon>
    </lineage>
</organism>
<gene>
    <name type="primary">fur</name>
    <name type="ordered locus">SF0610</name>
    <name type="ordered locus">S0621</name>
</gene>
<protein>
    <recommendedName>
        <fullName>Ferric uptake regulation protein</fullName>
        <shortName>Ferric uptake regulator</shortName>
    </recommendedName>
</protein>